<dbReference type="EC" id="2.3.2.27" evidence="2"/>
<dbReference type="EMBL" id="AB222602">
    <property type="protein sequence ID" value="BAE16340.1"/>
    <property type="molecule type" value="mRNA"/>
</dbReference>
<dbReference type="EMBL" id="AF251503">
    <property type="protein sequence ID" value="AAK49039.1"/>
    <property type="molecule type" value="mRNA"/>
</dbReference>
<dbReference type="EMBL" id="AF386760">
    <property type="protein sequence ID" value="AAM21468.1"/>
    <property type="molecule type" value="Genomic_DNA"/>
</dbReference>
<dbReference type="EMBL" id="AK047693">
    <property type="protein sequence ID" value="BAC33127.1"/>
    <property type="molecule type" value="mRNA"/>
</dbReference>
<dbReference type="EMBL" id="AK076998">
    <property type="protein sequence ID" value="BAC36557.1"/>
    <property type="molecule type" value="mRNA"/>
</dbReference>
<dbReference type="EMBL" id="AK088769">
    <property type="protein sequence ID" value="BAC40560.1"/>
    <property type="molecule type" value="mRNA"/>
</dbReference>
<dbReference type="EMBL" id="AK164681">
    <property type="protein sequence ID" value="BAE37873.1"/>
    <property type="molecule type" value="mRNA"/>
</dbReference>
<dbReference type="EMBL" id="BC004070">
    <property type="protein sequence ID" value="AAH04070.1"/>
    <property type="molecule type" value="mRNA"/>
</dbReference>
<dbReference type="CCDS" id="CCDS57135.1">
    <molecule id="Q99KP6-2"/>
</dbReference>
<dbReference type="CCDS" id="CCDS79687.1">
    <molecule id="Q99KP6-1"/>
</dbReference>
<dbReference type="RefSeq" id="NP_001240772.1">
    <molecule id="Q99KP6-2"/>
    <property type="nucleotide sequence ID" value="NM_001253843.1"/>
</dbReference>
<dbReference type="RefSeq" id="NP_001240773.1">
    <molecule id="Q99KP6-3"/>
    <property type="nucleotide sequence ID" value="NM_001253844.1"/>
</dbReference>
<dbReference type="RefSeq" id="NP_598890.1">
    <molecule id="Q99KP6-1"/>
    <property type="nucleotide sequence ID" value="NM_134129.4"/>
</dbReference>
<dbReference type="PDB" id="8D5J">
    <property type="method" value="X-ray"/>
    <property type="resolution" value="1.95 A"/>
    <property type="chains" value="C=206-214"/>
</dbReference>
<dbReference type="PDB" id="8D5K">
    <property type="method" value="X-ray"/>
    <property type="resolution" value="2.07 A"/>
    <property type="chains" value="C=206-214"/>
</dbReference>
<dbReference type="PDBsum" id="8D5J"/>
<dbReference type="PDBsum" id="8D5K"/>
<dbReference type="SMR" id="Q99KP6"/>
<dbReference type="BioGRID" id="205709">
    <property type="interactions" value="58"/>
</dbReference>
<dbReference type="ComplexPortal" id="CPX-5825">
    <property type="entry name" value="PRP19-CDC5L complex"/>
</dbReference>
<dbReference type="CORUM" id="Q99KP6"/>
<dbReference type="FunCoup" id="Q99KP6">
    <property type="interactions" value="3477"/>
</dbReference>
<dbReference type="IntAct" id="Q99KP6">
    <property type="interactions" value="8"/>
</dbReference>
<dbReference type="MINT" id="Q99KP6"/>
<dbReference type="STRING" id="10090.ENSMUSP00000136858"/>
<dbReference type="GlyGen" id="Q99KP6">
    <property type="glycosylation" value="1 site, 1 O-linked glycan (1 site)"/>
</dbReference>
<dbReference type="iPTMnet" id="Q99KP6"/>
<dbReference type="PhosphoSitePlus" id="Q99KP6"/>
<dbReference type="SwissPalm" id="Q99KP6"/>
<dbReference type="REPRODUCTION-2DPAGE" id="Q99KP6"/>
<dbReference type="jPOST" id="Q99KP6"/>
<dbReference type="PaxDb" id="10090-ENSMUSP00000136858"/>
<dbReference type="PeptideAtlas" id="Q99KP6"/>
<dbReference type="ProteomicsDB" id="291890">
    <molecule id="Q99KP6-1"/>
</dbReference>
<dbReference type="ProteomicsDB" id="291891">
    <molecule id="Q99KP6-2"/>
</dbReference>
<dbReference type="ProteomicsDB" id="291892">
    <molecule id="Q99KP6-3"/>
</dbReference>
<dbReference type="Pumba" id="Q99KP6"/>
<dbReference type="Antibodypedia" id="3247">
    <property type="antibodies" value="330 antibodies from 35 providers"/>
</dbReference>
<dbReference type="DNASU" id="28000"/>
<dbReference type="Ensembl" id="ENSMUST00000025642.14">
    <molecule id="Q99KP6-1"/>
    <property type="protein sequence ID" value="ENSMUSP00000025642.9"/>
    <property type="gene ID" value="ENSMUSG00000024735.14"/>
</dbReference>
<dbReference type="Ensembl" id="ENSMUST00000179297.3">
    <molecule id="Q99KP6-2"/>
    <property type="protein sequence ID" value="ENSMUSP00000136858.3"/>
    <property type="gene ID" value="ENSMUSG00000024735.14"/>
</dbReference>
<dbReference type="GeneID" id="28000"/>
<dbReference type="KEGG" id="mmu:28000"/>
<dbReference type="UCSC" id="uc008grf.2">
    <molecule id="Q99KP6-1"/>
    <property type="organism name" value="mouse"/>
</dbReference>
<dbReference type="UCSC" id="uc008grg.2">
    <molecule id="Q99KP6-2"/>
    <property type="organism name" value="mouse"/>
</dbReference>
<dbReference type="AGR" id="MGI:106247"/>
<dbReference type="CTD" id="27339"/>
<dbReference type="MGI" id="MGI:106247">
    <property type="gene designation" value="Prpf19"/>
</dbReference>
<dbReference type="VEuPathDB" id="HostDB:ENSMUSG00000024735"/>
<dbReference type="eggNOG" id="KOG0289">
    <property type="taxonomic scope" value="Eukaryota"/>
</dbReference>
<dbReference type="GeneTree" id="ENSGT00940000153662"/>
<dbReference type="HOGENOM" id="CLU_023894_1_1_1"/>
<dbReference type="InParanoid" id="Q99KP6"/>
<dbReference type="OMA" id="SLDQHWA"/>
<dbReference type="OrthoDB" id="17923at9989"/>
<dbReference type="PhylomeDB" id="Q99KP6"/>
<dbReference type="Reactome" id="R-MMU-6781823">
    <property type="pathway name" value="Formation of TC-NER Pre-Incision Complex"/>
</dbReference>
<dbReference type="Reactome" id="R-MMU-6782135">
    <property type="pathway name" value="Dual incision in TC-NER"/>
</dbReference>
<dbReference type="Reactome" id="R-MMU-6782210">
    <property type="pathway name" value="Gap-filling DNA repair synthesis and ligation in TC-NER"/>
</dbReference>
<dbReference type="Reactome" id="R-MMU-72163">
    <property type="pathway name" value="mRNA Splicing - Major Pathway"/>
</dbReference>
<dbReference type="UniPathway" id="UPA00143"/>
<dbReference type="BioGRID-ORCS" id="28000">
    <property type="hits" value="41 hits in 121 CRISPR screens"/>
</dbReference>
<dbReference type="ChiTaRS" id="Prpf19">
    <property type="organism name" value="mouse"/>
</dbReference>
<dbReference type="PRO" id="PR:Q99KP6"/>
<dbReference type="Proteomes" id="UP000000589">
    <property type="component" value="Chromosome 19"/>
</dbReference>
<dbReference type="RNAct" id="Q99KP6">
    <property type="molecule type" value="protein"/>
</dbReference>
<dbReference type="Bgee" id="ENSMUSG00000024735">
    <property type="expression patterns" value="Expressed in floor plate of midbrain and 259 other cell types or tissues"/>
</dbReference>
<dbReference type="GO" id="GO:0005737">
    <property type="term" value="C:cytoplasm"/>
    <property type="evidence" value="ECO:0000314"/>
    <property type="project" value="MGI"/>
</dbReference>
<dbReference type="GO" id="GO:0005662">
    <property type="term" value="C:DNA replication factor A complex"/>
    <property type="evidence" value="ECO:0007669"/>
    <property type="project" value="Ensembl"/>
</dbReference>
<dbReference type="GO" id="GO:0005811">
    <property type="term" value="C:lipid droplet"/>
    <property type="evidence" value="ECO:0000314"/>
    <property type="project" value="MGI"/>
</dbReference>
<dbReference type="GO" id="GO:0016607">
    <property type="term" value="C:nuclear speck"/>
    <property type="evidence" value="ECO:0000250"/>
    <property type="project" value="UniProtKB"/>
</dbReference>
<dbReference type="GO" id="GO:0005634">
    <property type="term" value="C:nucleus"/>
    <property type="evidence" value="ECO:0000314"/>
    <property type="project" value="MGI"/>
</dbReference>
<dbReference type="GO" id="GO:0000974">
    <property type="term" value="C:Prp19 complex"/>
    <property type="evidence" value="ECO:0000250"/>
    <property type="project" value="UniProtKB"/>
</dbReference>
<dbReference type="GO" id="GO:0035861">
    <property type="term" value="C:site of double-strand break"/>
    <property type="evidence" value="ECO:0000250"/>
    <property type="project" value="UniProtKB"/>
</dbReference>
<dbReference type="GO" id="GO:0005819">
    <property type="term" value="C:spindle"/>
    <property type="evidence" value="ECO:0007669"/>
    <property type="project" value="UniProtKB-SubCell"/>
</dbReference>
<dbReference type="GO" id="GO:0005681">
    <property type="term" value="C:spliceosomal complex"/>
    <property type="evidence" value="ECO:0000266"/>
    <property type="project" value="MGI"/>
</dbReference>
<dbReference type="GO" id="GO:0071007">
    <property type="term" value="C:U2-type catalytic step 2 spliceosome"/>
    <property type="evidence" value="ECO:0007669"/>
    <property type="project" value="Ensembl"/>
</dbReference>
<dbReference type="GO" id="GO:0042802">
    <property type="term" value="F:identical protein binding"/>
    <property type="evidence" value="ECO:0007669"/>
    <property type="project" value="Ensembl"/>
</dbReference>
<dbReference type="GO" id="GO:0061630">
    <property type="term" value="F:ubiquitin protein ligase activity"/>
    <property type="evidence" value="ECO:0000250"/>
    <property type="project" value="UniProtKB"/>
</dbReference>
<dbReference type="GO" id="GO:0034450">
    <property type="term" value="F:ubiquitin-ubiquitin ligase activity"/>
    <property type="evidence" value="ECO:0000266"/>
    <property type="project" value="MGI"/>
</dbReference>
<dbReference type="GO" id="GO:0000077">
    <property type="term" value="P:DNA damage checkpoint signaling"/>
    <property type="evidence" value="ECO:0000250"/>
    <property type="project" value="UniProtKB"/>
</dbReference>
<dbReference type="GO" id="GO:0006303">
    <property type="term" value="P:double-strand break repair via nonhomologous end joining"/>
    <property type="evidence" value="ECO:0000250"/>
    <property type="project" value="UniProtKB"/>
</dbReference>
<dbReference type="GO" id="GO:0001833">
    <property type="term" value="P:inner cell mass cell proliferation"/>
    <property type="evidence" value="ECO:0000315"/>
    <property type="project" value="MGI"/>
</dbReference>
<dbReference type="GO" id="GO:0008610">
    <property type="term" value="P:lipid biosynthetic process"/>
    <property type="evidence" value="ECO:0000314"/>
    <property type="project" value="MGI"/>
</dbReference>
<dbReference type="GO" id="GO:0000398">
    <property type="term" value="P:mRNA splicing, via spliceosome"/>
    <property type="evidence" value="ECO:0000250"/>
    <property type="project" value="UniProtKB"/>
</dbReference>
<dbReference type="GO" id="GO:0045665">
    <property type="term" value="P:negative regulation of neuron differentiation"/>
    <property type="evidence" value="ECO:0000314"/>
    <property type="project" value="MGI"/>
</dbReference>
<dbReference type="GO" id="GO:0048711">
    <property type="term" value="P:positive regulation of astrocyte differentiation"/>
    <property type="evidence" value="ECO:0000314"/>
    <property type="project" value="MGI"/>
</dbReference>
<dbReference type="GO" id="GO:0048026">
    <property type="term" value="P:positive regulation of mRNA splicing, via spliceosome"/>
    <property type="evidence" value="ECO:0000315"/>
    <property type="project" value="MGI"/>
</dbReference>
<dbReference type="GO" id="GO:0045666">
    <property type="term" value="P:positive regulation of neuron differentiation"/>
    <property type="evidence" value="ECO:0000266"/>
    <property type="project" value="MGI"/>
</dbReference>
<dbReference type="GO" id="GO:0010498">
    <property type="term" value="P:proteasomal protein catabolic process"/>
    <property type="evidence" value="ECO:0000315"/>
    <property type="project" value="UniProtKB"/>
</dbReference>
<dbReference type="GO" id="GO:0070534">
    <property type="term" value="P:protein K63-linked ubiquitination"/>
    <property type="evidence" value="ECO:0000250"/>
    <property type="project" value="UniProtKB"/>
</dbReference>
<dbReference type="GO" id="GO:0008104">
    <property type="term" value="P:protein localization"/>
    <property type="evidence" value="ECO:0000250"/>
    <property type="project" value="UniProtKB"/>
</dbReference>
<dbReference type="GO" id="GO:0000209">
    <property type="term" value="P:protein polyubiquitination"/>
    <property type="evidence" value="ECO:0000266"/>
    <property type="project" value="MGI"/>
</dbReference>
<dbReference type="GO" id="GO:0000245">
    <property type="term" value="P:spliceosomal complex assembly"/>
    <property type="evidence" value="ECO:0007669"/>
    <property type="project" value="Ensembl"/>
</dbReference>
<dbReference type="GO" id="GO:0000244">
    <property type="term" value="P:spliceosomal tri-snRNP complex assembly"/>
    <property type="evidence" value="ECO:0000250"/>
    <property type="project" value="UniProtKB"/>
</dbReference>
<dbReference type="CDD" id="cd16656">
    <property type="entry name" value="RING-Ubox_PRP19"/>
    <property type="match status" value="1"/>
</dbReference>
<dbReference type="CDD" id="cd00200">
    <property type="entry name" value="WD40"/>
    <property type="match status" value="1"/>
</dbReference>
<dbReference type="FunFam" id="2.130.10.10:FF:000043">
    <property type="entry name" value="pre-mRNA-processing factor 19"/>
    <property type="match status" value="1"/>
</dbReference>
<dbReference type="FunFam" id="3.30.40.10:FF:000027">
    <property type="entry name" value="Pre-mRNA-processing factor 19, putative"/>
    <property type="match status" value="1"/>
</dbReference>
<dbReference type="Gene3D" id="2.130.10.10">
    <property type="entry name" value="YVTN repeat-like/Quinoprotein amine dehydrogenase"/>
    <property type="match status" value="1"/>
</dbReference>
<dbReference type="Gene3D" id="3.30.40.10">
    <property type="entry name" value="Zinc/RING finger domain, C3HC4 (zinc finger)"/>
    <property type="match status" value="1"/>
</dbReference>
<dbReference type="InterPro" id="IPR020472">
    <property type="entry name" value="G-protein_beta_WD-40_rep"/>
</dbReference>
<dbReference type="InterPro" id="IPR013915">
    <property type="entry name" value="Pre-mRNA_splic_Prp19_cc"/>
</dbReference>
<dbReference type="InterPro" id="IPR038959">
    <property type="entry name" value="Prp19"/>
</dbReference>
<dbReference type="InterPro" id="IPR055340">
    <property type="entry name" value="RING-Ubox_PRP19"/>
</dbReference>
<dbReference type="InterPro" id="IPR003613">
    <property type="entry name" value="Ubox_domain"/>
</dbReference>
<dbReference type="InterPro" id="IPR015943">
    <property type="entry name" value="WD40/YVTN_repeat-like_dom_sf"/>
</dbReference>
<dbReference type="InterPro" id="IPR019775">
    <property type="entry name" value="WD40_repeat_CS"/>
</dbReference>
<dbReference type="InterPro" id="IPR036322">
    <property type="entry name" value="WD40_repeat_dom_sf"/>
</dbReference>
<dbReference type="InterPro" id="IPR001680">
    <property type="entry name" value="WD40_rpt"/>
</dbReference>
<dbReference type="InterPro" id="IPR013083">
    <property type="entry name" value="Znf_RING/FYVE/PHD"/>
</dbReference>
<dbReference type="PANTHER" id="PTHR43995">
    <property type="entry name" value="PRE-MRNA-PROCESSING FACTOR 19"/>
    <property type="match status" value="1"/>
</dbReference>
<dbReference type="PANTHER" id="PTHR43995:SF1">
    <property type="entry name" value="PRE-MRNA-PROCESSING FACTOR 19"/>
    <property type="match status" value="1"/>
</dbReference>
<dbReference type="Pfam" id="PF08606">
    <property type="entry name" value="Prp19"/>
    <property type="match status" value="1"/>
</dbReference>
<dbReference type="Pfam" id="PF04564">
    <property type="entry name" value="U-box"/>
    <property type="match status" value="1"/>
</dbReference>
<dbReference type="Pfam" id="PF24814">
    <property type="entry name" value="WD40_Prp19"/>
    <property type="match status" value="1"/>
</dbReference>
<dbReference type="PRINTS" id="PR00320">
    <property type="entry name" value="GPROTEINBRPT"/>
</dbReference>
<dbReference type="SMART" id="SM00504">
    <property type="entry name" value="Ubox"/>
    <property type="match status" value="1"/>
</dbReference>
<dbReference type="SMART" id="SM00320">
    <property type="entry name" value="WD40"/>
    <property type="match status" value="7"/>
</dbReference>
<dbReference type="SUPFAM" id="SSF57850">
    <property type="entry name" value="RING/U-box"/>
    <property type="match status" value="1"/>
</dbReference>
<dbReference type="SUPFAM" id="SSF50978">
    <property type="entry name" value="WD40 repeat-like"/>
    <property type="match status" value="1"/>
</dbReference>
<dbReference type="PROSITE" id="PS51698">
    <property type="entry name" value="U_BOX"/>
    <property type="match status" value="1"/>
</dbReference>
<dbReference type="PROSITE" id="PS00678">
    <property type="entry name" value="WD_REPEATS_1"/>
    <property type="match status" value="1"/>
</dbReference>
<dbReference type="PROSITE" id="PS50082">
    <property type="entry name" value="WD_REPEATS_2"/>
    <property type="match status" value="4"/>
</dbReference>
<dbReference type="PROSITE" id="PS50294">
    <property type="entry name" value="WD_REPEATS_REGION"/>
    <property type="match status" value="1"/>
</dbReference>
<gene>
    <name evidence="10" type="primary">Prpf19</name>
    <name type="synonym">Prp19</name>
    <name evidence="7" type="synonym">Snev</name>
</gene>
<name>PRP19_MOUSE</name>
<protein>
    <recommendedName>
        <fullName evidence="8">Pre-mRNA-processing factor 19</fullName>
        <ecNumber evidence="2">2.3.2.27</ecNumber>
    </recommendedName>
    <alternativeName>
        <fullName evidence="7">Nuclear matrix protein 200</fullName>
    </alternativeName>
    <alternativeName>
        <fullName>PRP19/PSO4 homolog</fullName>
    </alternativeName>
    <alternativeName>
        <fullName evidence="8">RING-type E3 ubiquitin transferase PRP19</fullName>
    </alternativeName>
    <alternativeName>
        <fullName evidence="7">Senescence evasion factor</fullName>
    </alternativeName>
</protein>
<organism>
    <name type="scientific">Mus musculus</name>
    <name type="common">Mouse</name>
    <dbReference type="NCBI Taxonomy" id="10090"/>
    <lineage>
        <taxon>Eukaryota</taxon>
        <taxon>Metazoa</taxon>
        <taxon>Chordata</taxon>
        <taxon>Craniata</taxon>
        <taxon>Vertebrata</taxon>
        <taxon>Euteleostomi</taxon>
        <taxon>Mammalia</taxon>
        <taxon>Eutheria</taxon>
        <taxon>Euarchontoglires</taxon>
        <taxon>Glires</taxon>
        <taxon>Rodentia</taxon>
        <taxon>Myomorpha</taxon>
        <taxon>Muroidea</taxon>
        <taxon>Muridae</taxon>
        <taxon>Murinae</taxon>
        <taxon>Mus</taxon>
        <taxon>Mus</taxon>
    </lineage>
</organism>
<evidence type="ECO:0000250" key="1">
    <source>
        <dbReference type="UniProtKB" id="Q9JMJ4"/>
    </source>
</evidence>
<evidence type="ECO:0000250" key="2">
    <source>
        <dbReference type="UniProtKB" id="Q9UMS4"/>
    </source>
</evidence>
<evidence type="ECO:0000269" key="3">
    <source>
    </source>
</evidence>
<evidence type="ECO:0000269" key="4">
    <source>
    </source>
</evidence>
<evidence type="ECO:0000269" key="5">
    <source>
    </source>
</evidence>
<evidence type="ECO:0000303" key="6">
    <source>
    </source>
</evidence>
<evidence type="ECO:0000303" key="7">
    <source ref="2"/>
</evidence>
<evidence type="ECO:0000305" key="8"/>
<evidence type="ECO:0000312" key="9">
    <source>
        <dbReference type="EMBL" id="BAE16340.1"/>
    </source>
</evidence>
<evidence type="ECO:0000312" key="10">
    <source>
        <dbReference type="MGI" id="MGI:106247"/>
    </source>
</evidence>
<evidence type="ECO:0007744" key="11">
    <source>
    </source>
</evidence>
<keyword id="KW-0002">3D-structure</keyword>
<keyword id="KW-0007">Acetylation</keyword>
<keyword id="KW-0025">Alternative splicing</keyword>
<keyword id="KW-0963">Cytoplasm</keyword>
<keyword id="KW-0206">Cytoskeleton</keyword>
<keyword id="KW-0227">DNA damage</keyword>
<keyword id="KW-0234">DNA repair</keyword>
<keyword id="KW-0551">Lipid droplet</keyword>
<keyword id="KW-0507">mRNA processing</keyword>
<keyword id="KW-0508">mRNA splicing</keyword>
<keyword id="KW-0539">Nucleus</keyword>
<keyword id="KW-1185">Reference proteome</keyword>
<keyword id="KW-0677">Repeat</keyword>
<keyword id="KW-0747">Spliceosome</keyword>
<keyword id="KW-0808">Transferase</keyword>
<keyword id="KW-0833">Ubl conjugation pathway</keyword>
<keyword id="KW-0853">WD repeat</keyword>
<accession>Q99KP6</accession>
<accession>Q3TP64</accession>
<accession>Q4ADG5</accession>
<accession>Q8BKZ5</accession>
<accession>Q8BVQ4</accession>
<reference evidence="9" key="1">
    <citation type="journal article" date="2006" name="J. Biol. Chem.">
        <title>Involvement of the mouse Prp19 gene in neuronal/astroglial cell fate decisions.</title>
        <authorList>
            <person name="Urano Y."/>
            <person name="Iiduka M."/>
            <person name="Sugiyama A."/>
            <person name="Akiyama H."/>
            <person name="Uzawa K."/>
            <person name="Matsumoto G."/>
            <person name="Kawasaki Y."/>
            <person name="Tashiro F."/>
        </authorList>
    </citation>
    <scope>NUCLEOTIDE SEQUENCE [MRNA] (ISOFORM 2)</scope>
    <scope>FUNCTION</scope>
    <scope>INTERACTION WITH PPIA</scope>
    <scope>SUBCELLULAR LOCATION</scope>
    <scope>INDUCTION</scope>
    <source>
        <strain evidence="9">ICR</strain>
        <tissue evidence="9">Brain</tissue>
    </source>
</reference>
<reference key="2">
    <citation type="submission" date="2000-04" db="EMBL/GenBank/DDBJ databases">
        <title>Cloning of mSNEV, the mouse homologue of the human nuclear matrix protein NMP200.</title>
        <authorList>
            <person name="Grillari J."/>
            <person name="Gross S."/>
            <person name="Katinger H."/>
        </authorList>
    </citation>
    <scope>NUCLEOTIDE SEQUENCE [MRNA] (ISOFORM 1)</scope>
    <source>
        <strain>Swiss albino</strain>
    </source>
</reference>
<reference key="3">
    <citation type="submission" date="2001-05" db="EMBL/GenBank/DDBJ databases">
        <authorList>
            <person name="Fortschegger K."/>
            <person name="Grillari J."/>
            <person name="Katinger H."/>
        </authorList>
    </citation>
    <scope>NUCLEOTIDE SEQUENCE [GENOMIC DNA] (ISOFORM 1)</scope>
    <source>
        <strain>129/SvJ</strain>
    </source>
</reference>
<reference key="4">
    <citation type="journal article" date="2005" name="Science">
        <title>The transcriptional landscape of the mammalian genome.</title>
        <authorList>
            <person name="Carninci P."/>
            <person name="Kasukawa T."/>
            <person name="Katayama S."/>
            <person name="Gough J."/>
            <person name="Frith M.C."/>
            <person name="Maeda N."/>
            <person name="Oyama R."/>
            <person name="Ravasi T."/>
            <person name="Lenhard B."/>
            <person name="Wells C."/>
            <person name="Kodzius R."/>
            <person name="Shimokawa K."/>
            <person name="Bajic V.B."/>
            <person name="Brenner S.E."/>
            <person name="Batalov S."/>
            <person name="Forrest A.R."/>
            <person name="Zavolan M."/>
            <person name="Davis M.J."/>
            <person name="Wilming L.G."/>
            <person name="Aidinis V."/>
            <person name="Allen J.E."/>
            <person name="Ambesi-Impiombato A."/>
            <person name="Apweiler R."/>
            <person name="Aturaliya R.N."/>
            <person name="Bailey T.L."/>
            <person name="Bansal M."/>
            <person name="Baxter L."/>
            <person name="Beisel K.W."/>
            <person name="Bersano T."/>
            <person name="Bono H."/>
            <person name="Chalk A.M."/>
            <person name="Chiu K.P."/>
            <person name="Choudhary V."/>
            <person name="Christoffels A."/>
            <person name="Clutterbuck D.R."/>
            <person name="Crowe M.L."/>
            <person name="Dalla E."/>
            <person name="Dalrymple B.P."/>
            <person name="de Bono B."/>
            <person name="Della Gatta G."/>
            <person name="di Bernardo D."/>
            <person name="Down T."/>
            <person name="Engstrom P."/>
            <person name="Fagiolini M."/>
            <person name="Faulkner G."/>
            <person name="Fletcher C.F."/>
            <person name="Fukushima T."/>
            <person name="Furuno M."/>
            <person name="Futaki S."/>
            <person name="Gariboldi M."/>
            <person name="Georgii-Hemming P."/>
            <person name="Gingeras T.R."/>
            <person name="Gojobori T."/>
            <person name="Green R.E."/>
            <person name="Gustincich S."/>
            <person name="Harbers M."/>
            <person name="Hayashi Y."/>
            <person name="Hensch T.K."/>
            <person name="Hirokawa N."/>
            <person name="Hill D."/>
            <person name="Huminiecki L."/>
            <person name="Iacono M."/>
            <person name="Ikeo K."/>
            <person name="Iwama A."/>
            <person name="Ishikawa T."/>
            <person name="Jakt M."/>
            <person name="Kanapin A."/>
            <person name="Katoh M."/>
            <person name="Kawasawa Y."/>
            <person name="Kelso J."/>
            <person name="Kitamura H."/>
            <person name="Kitano H."/>
            <person name="Kollias G."/>
            <person name="Krishnan S.P."/>
            <person name="Kruger A."/>
            <person name="Kummerfeld S.K."/>
            <person name="Kurochkin I.V."/>
            <person name="Lareau L.F."/>
            <person name="Lazarevic D."/>
            <person name="Lipovich L."/>
            <person name="Liu J."/>
            <person name="Liuni S."/>
            <person name="McWilliam S."/>
            <person name="Madan Babu M."/>
            <person name="Madera M."/>
            <person name="Marchionni L."/>
            <person name="Matsuda H."/>
            <person name="Matsuzawa S."/>
            <person name="Miki H."/>
            <person name="Mignone F."/>
            <person name="Miyake S."/>
            <person name="Morris K."/>
            <person name="Mottagui-Tabar S."/>
            <person name="Mulder N."/>
            <person name="Nakano N."/>
            <person name="Nakauchi H."/>
            <person name="Ng P."/>
            <person name="Nilsson R."/>
            <person name="Nishiguchi S."/>
            <person name="Nishikawa S."/>
            <person name="Nori F."/>
            <person name="Ohara O."/>
            <person name="Okazaki Y."/>
            <person name="Orlando V."/>
            <person name="Pang K.C."/>
            <person name="Pavan W.J."/>
            <person name="Pavesi G."/>
            <person name="Pesole G."/>
            <person name="Petrovsky N."/>
            <person name="Piazza S."/>
            <person name="Reed J."/>
            <person name="Reid J.F."/>
            <person name="Ring B.Z."/>
            <person name="Ringwald M."/>
            <person name="Rost B."/>
            <person name="Ruan Y."/>
            <person name="Salzberg S.L."/>
            <person name="Sandelin A."/>
            <person name="Schneider C."/>
            <person name="Schoenbach C."/>
            <person name="Sekiguchi K."/>
            <person name="Semple C.A."/>
            <person name="Seno S."/>
            <person name="Sessa L."/>
            <person name="Sheng Y."/>
            <person name="Shibata Y."/>
            <person name="Shimada H."/>
            <person name="Shimada K."/>
            <person name="Silva D."/>
            <person name="Sinclair B."/>
            <person name="Sperling S."/>
            <person name="Stupka E."/>
            <person name="Sugiura K."/>
            <person name="Sultana R."/>
            <person name="Takenaka Y."/>
            <person name="Taki K."/>
            <person name="Tammoja K."/>
            <person name="Tan S.L."/>
            <person name="Tang S."/>
            <person name="Taylor M.S."/>
            <person name="Tegner J."/>
            <person name="Teichmann S.A."/>
            <person name="Ueda H.R."/>
            <person name="van Nimwegen E."/>
            <person name="Verardo R."/>
            <person name="Wei C.L."/>
            <person name="Yagi K."/>
            <person name="Yamanishi H."/>
            <person name="Zabarovsky E."/>
            <person name="Zhu S."/>
            <person name="Zimmer A."/>
            <person name="Hide W."/>
            <person name="Bult C."/>
            <person name="Grimmond S.M."/>
            <person name="Teasdale R.D."/>
            <person name="Liu E.T."/>
            <person name="Brusic V."/>
            <person name="Quackenbush J."/>
            <person name="Wahlestedt C."/>
            <person name="Mattick J.S."/>
            <person name="Hume D.A."/>
            <person name="Kai C."/>
            <person name="Sasaki D."/>
            <person name="Tomaru Y."/>
            <person name="Fukuda S."/>
            <person name="Kanamori-Katayama M."/>
            <person name="Suzuki M."/>
            <person name="Aoki J."/>
            <person name="Arakawa T."/>
            <person name="Iida J."/>
            <person name="Imamura K."/>
            <person name="Itoh M."/>
            <person name="Kato T."/>
            <person name="Kawaji H."/>
            <person name="Kawagashira N."/>
            <person name="Kawashima T."/>
            <person name="Kojima M."/>
            <person name="Kondo S."/>
            <person name="Konno H."/>
            <person name="Nakano K."/>
            <person name="Ninomiya N."/>
            <person name="Nishio T."/>
            <person name="Okada M."/>
            <person name="Plessy C."/>
            <person name="Shibata K."/>
            <person name="Shiraki T."/>
            <person name="Suzuki S."/>
            <person name="Tagami M."/>
            <person name="Waki K."/>
            <person name="Watahiki A."/>
            <person name="Okamura-Oho Y."/>
            <person name="Suzuki H."/>
            <person name="Kawai J."/>
            <person name="Hayashizaki Y."/>
        </authorList>
    </citation>
    <scope>NUCLEOTIDE SEQUENCE [LARGE SCALE MRNA] (ISOFORMS 1; 2 AND 3)</scope>
    <source>
        <strain>C57BL/6J</strain>
        <strain>NOD</strain>
        <tissue>Corpus striatum</tissue>
        <tissue>Stomach</tissue>
        <tissue>Testis</tissue>
        <tissue>Thymus</tissue>
    </source>
</reference>
<reference key="5">
    <citation type="journal article" date="2004" name="Genome Res.">
        <title>The status, quality, and expansion of the NIH full-length cDNA project: the Mammalian Gene Collection (MGC).</title>
        <authorList>
            <consortium name="The MGC Project Team"/>
        </authorList>
    </citation>
    <scope>NUCLEOTIDE SEQUENCE [LARGE SCALE MRNA] (ISOFORM 1)</scope>
    <source>
        <strain>Czech II</strain>
        <tissue>Mammary gland</tissue>
    </source>
</reference>
<reference key="6">
    <citation type="journal article" date="2007" name="Biochem. Biophys. Res. Commun.">
        <title>Mouse homologue of yeast Prp19 interacts with mouse SUG1, the regulatory subunit of 26S proteasome.</title>
        <authorList>
            <person name="Sihn C.R."/>
            <person name="Cho S.Y."/>
            <person name="Lee J.H."/>
            <person name="Lee T.R."/>
            <person name="Kim S.H."/>
        </authorList>
    </citation>
    <scope>FUNCTION</scope>
    <scope>INTERACTION WITH PSMC5</scope>
</reference>
<reference key="7">
    <citation type="journal article" date="2007" name="J. Biol. Chem.">
        <title>Identification of mouse Prp19p as a lipid droplet-associated protein and its possible involvement in the biogenesis of lipid droplets.</title>
        <authorList>
            <person name="Cho S.Y."/>
            <person name="Shin E.S."/>
            <person name="Park P.J."/>
            <person name="Shin D.W."/>
            <person name="Chang H.K."/>
            <person name="Kim D."/>
            <person name="Lee H.H."/>
            <person name="Lee J.H."/>
            <person name="Kim S.H."/>
            <person name="Song M.J."/>
            <person name="Chang I.S."/>
            <person name="Lee O.S."/>
            <person name="Lee T.R."/>
        </authorList>
    </citation>
    <scope>FUNCTION</scope>
    <scope>SUBCELLULAR LOCATION</scope>
    <scope>INDUCTION</scope>
    <scope>TISSUE SPECIFICITY</scope>
</reference>
<reference key="8">
    <citation type="journal article" date="2010" name="Cell">
        <title>A tissue-specific atlas of mouse protein phosphorylation and expression.</title>
        <authorList>
            <person name="Huttlin E.L."/>
            <person name="Jedrychowski M.P."/>
            <person name="Elias J.E."/>
            <person name="Goswami T."/>
            <person name="Rad R."/>
            <person name="Beausoleil S.A."/>
            <person name="Villen J."/>
            <person name="Haas W."/>
            <person name="Sowa M.E."/>
            <person name="Gygi S.P."/>
        </authorList>
    </citation>
    <scope>IDENTIFICATION BY MASS SPECTROMETRY [LARGE SCALE ANALYSIS]</scope>
    <source>
        <tissue>Brain</tissue>
        <tissue>Brown adipose tissue</tissue>
        <tissue>Kidney</tissue>
        <tissue>Liver</tissue>
        <tissue>Lung</tissue>
        <tissue>Pancreas</tissue>
        <tissue>Spleen</tissue>
        <tissue>Testis</tissue>
    </source>
</reference>
<reference key="9">
    <citation type="journal article" date="2013" name="Mol. Cell">
        <title>SIRT5-mediated lysine desuccinylation impacts diverse metabolic pathways.</title>
        <authorList>
            <person name="Park J."/>
            <person name="Chen Y."/>
            <person name="Tishkoff D.X."/>
            <person name="Peng C."/>
            <person name="Tan M."/>
            <person name="Dai L."/>
            <person name="Xie Z."/>
            <person name="Zhang Y."/>
            <person name="Zwaans B.M."/>
            <person name="Skinner M.E."/>
            <person name="Lombard D.B."/>
            <person name="Zhao Y."/>
        </authorList>
    </citation>
    <scope>ACETYLATION [LARGE SCALE ANALYSIS] AT LYS-179 AND LYS-244</scope>
    <scope>IDENTIFICATION BY MASS SPECTROMETRY [LARGE SCALE ANALYSIS]</scope>
    <source>
        <tissue>Embryonic fibroblast</tissue>
    </source>
</reference>
<comment type="function">
    <molecule>Isoform 1</molecule>
    <text evidence="1 2 4 5">Ubiquitin-protein ligase which is a core component of several complexes mainly involved in pre-mRNA splicing and DNA repair. Required for pre-mRNA splicing as component of the spliceosome. Core component of the PRP19C/Prp19 complex/NTC/Nineteen complex which is part of the spliceosome and participates in its assembly, its remodeling and is required for its activity. During assembly of the spliceosome, mediates 'Lys-63'-linked polyubiquitination of the U4 spliceosomal protein PRPF3. Ubiquitination of PRPF3 allows its recognition by the U5 component PRPF8 and stabilizes the U4/U5/U6 tri-snRNP spliceosomal complex. Recruited to RNA polymerase II C-terminal domain (CTD) and the pre-mRNA, it may also couple the transcriptional and spliceosomal machineries. The XAB2 complex, which contains PRPF19, is also involved in pre-mRNA splicing, transcription and transcription-coupled repair. Beside its role in pre-mRNA splicing PRPF19, as part of the PRP19-CDC5L complex, plays a role in the DNA damage response/DDR. It is recruited to the sites of DNA damage by the RPA complex where PRPF19 directly ubiquitinates RPA1 and RPA2. 'Lys-63'-linked polyubiquitination of the RPA complex allows the recruitment of the ATR-ATRIP complex and the activation of ATR, a master regulator of the DNA damage response. May also play a role in DNA double-strand break (DSB) repair by recruiting the repair factor SETMAR to altered DNA. As part of the PSO4 complex may also be involved in the DNA interstrand cross-links/ICLs repair process. In addition, may also mediate 'Lys-48'-linked polyubiquitination of substrates and play a role in proteasomal degradation (PubMed:17349974). May play a role in the biogenesis of lipid droplets (PubMed:17118936). May play a role in neural differentiation possibly through its function as part of the spliceosome (By similarity).</text>
</comment>
<comment type="function">
    <molecule>Isoform 2</molecule>
    <text evidence="3">Forced expression leads to suppression of neuronal differentiation, and on the contrary to stimulation of astroglial cell differentiation in retinoic acid-primed P19 cells (PubMed:16352598).</text>
</comment>
<comment type="catalytic activity">
    <reaction evidence="2">
        <text>S-ubiquitinyl-[E2 ubiquitin-conjugating enzyme]-L-cysteine + [acceptor protein]-L-lysine = [E2 ubiquitin-conjugating enzyme]-L-cysteine + N(6)-ubiquitinyl-[acceptor protein]-L-lysine.</text>
        <dbReference type="EC" id="2.3.2.27"/>
    </reaction>
</comment>
<comment type="pathway">
    <text evidence="2">Protein modification; protein ubiquitination.</text>
</comment>
<comment type="subunit">
    <text evidence="2 3 5">Homotetramer. Component of activated, catalytic and post-catalytic spliceosomes. Component of the Prp19 complex/PRP19C/Nineteen complex/NTC and related complexes described as PRP19-CDC5L splicing complex and PSO4 complex. A homotetramer of PRPF19, CDC5L, PLRG1 and BCAS2 constitute the core of those complexes. The interaction with CDC5L, PLRG1 and BCAS2 is direct within this core complex. At least three less stably associated proteins CTNNBL1, CWC15 and HSPA8 are found in the Prp19 complex. The Prp19 complex associates with the spliceosome during its assembly and remodeling recruiting additional proteins. Component of the XAB2 complex, a multimeric protein complex composed of XAB2, PRPF19, AQR, ZNF830, ISY1, and PPIE. Interacts with CWC22 and EIF4A3 in an RNA-independent manner. Interacts with RPA1 and RPA2; the PRP19-CDC5L complex is recruited to the sites of DNA repair where it interacts with the replication protein A complex (RPA). Interacts with SETMAR; required for SETMAR recruitment to site of DNA damage. Interacts with U2AF2; the interaction is direct and recruits the Prp19 complex to RNA polymerase II C-terminal domain (CTD) and the pre-mRNA. Interacts with PRPF3. Interacts with APEX1, DNTT and PSMB4. Interacts with KNSTRN (By similarity). Interacts with PSMC5 (PubMed:17349974). Isoform 2 (via N-terminus) interacts with PPIA. Isoform 2 does not interact with CDC5L (PubMed:16352598). Interacts with KHDC4 (By similarity). Interacts with USB1 (By similarity). Interacts with DDX41 (By similarity).</text>
</comment>
<comment type="subcellular location">
    <molecule>Isoform 1</molecule>
    <subcellularLocation>
        <location evidence="3">Nucleus</location>
    </subcellularLocation>
    <subcellularLocation>
        <location evidence="2">Nucleus</location>
        <location evidence="2">Nucleoplasm</location>
    </subcellularLocation>
    <subcellularLocation>
        <location evidence="2">Cytoplasm</location>
        <location evidence="2">Cytoskeleton</location>
        <location evidence="2">Spindle</location>
    </subcellularLocation>
    <subcellularLocation>
        <location evidence="2">Cytoplasm</location>
    </subcellularLocation>
    <subcellularLocation>
        <location evidence="4">Lipid droplet</location>
    </subcellularLocation>
    <text evidence="2">Nucleoplasmic in interphase cells. Irregularly distributed in anaphase cells. In prophase cells, uniformly distributed, but not associated with condensing chromosomes. Found in extrachromosomal regions in metaphase cells. Mainly localized to the mitotic spindle apparatus when chromosomes segregate during anaphase. When nuclei reform during late telophase, uniformly distributed in daughter cells and displays no preferred association with decondensing chromatin. Recruited on damaged DNA at sites of double-strand break (By similarity).</text>
</comment>
<comment type="subcellular location">
    <molecule>Isoform 2</molecule>
    <subcellularLocation>
        <location evidence="3">Cytoplasm</location>
    </subcellularLocation>
    <subcellularLocation>
        <location evidence="3">Nucleus</location>
    </subcellularLocation>
</comment>
<comment type="alternative products">
    <event type="alternative splicing"/>
    <isoform>
        <id>Q99KP6-1</id>
        <name>1</name>
        <sequence type="displayed"/>
    </isoform>
    <isoform>
        <id>Q99KP6-2</id>
        <name>2</name>
        <sequence type="described" ref="VSP_011945"/>
    </isoform>
    <isoform>
        <id>Q99KP6-3</id>
        <name>3</name>
        <sequence type="described" ref="VSP_012192"/>
    </isoform>
</comment>
<comment type="tissue specificity">
    <text evidence="4">Expressed in white and brown adipose tissues, brain and to a lower extent in liver, kidney, muscle, lung and spleen (at protein level).</text>
</comment>
<comment type="induction">
    <text evidence="3 4">Up-regulated in differentiating adipocytes (PubMed:17118936). Isoform 2 maximal expression level during the neural differentiation of P19 cells treated with retinoic acid (RA) is estimated to be 2.5-fold of the expression level of the untreated cells and it is detected 1-2 days after RA treatment and it decreases steeply thereafter to the basal level. Isoform 2 expression level increases steeply after 1 day of RA treatment and is estimated to be 4.2-fold of the original level at 0 hours (PubMed:16352598).</text>
</comment>
<comment type="domain">
    <text evidence="2">The 7 WD repeats are necessary and sufficient to support interaction with the RPA complex.</text>
</comment>
<comment type="similarity">
    <text evidence="8">Belongs to the WD repeat PRP19 family.</text>
</comment>
<sequence length="504" mass="55239">MSLICSISNEVPEHPCVSPVSNHVYERRLIEKYIAENGTDPINNQPLSEEQLIDIKVAHPIRPKPPSATSIPAILKALQDEWDAVMLHSFTLRQQLQTTRQELSHALYQHDAACRVIARLTKEVTAAREALATLKPQAGLIVPQAVPSSQPSVVGAGEPMDLGELVGMTPEIIQKLQDKATVLTTERKKRGKTVPEELVKPEELSKYRQVASHVGLHSASIPGILALDLCPSDTNKILTGGADKNVVVFDKSTEQILATLKGHTKKVTSVVFHPSQELVFSASPDATIRIWSVPNTSCVQVVRAHESAVTGLSLHATGDYLLSSSDDQYWAFSDIQTGRVLTKVTDETSGCSLTCAQFHPDGLIFGTGTMDSQIKIWDLKERTNVANFPGHSGPITSIAFSENGYYLATAADDSSVKLWDLRKLKNFKTLQLDNNFEVKSLIFDQSGTYLALGGTDVQIYICKQWTEILHFTEHSGLTTGVAFGHHAKFIASTGMDRSLKFYSL</sequence>
<feature type="initiator methionine" description="Removed" evidence="2">
    <location>
        <position position="1"/>
    </location>
</feature>
<feature type="chain" id="PRO_0000051146" description="Pre-mRNA-processing factor 19">
    <location>
        <begin position="2"/>
        <end position="504"/>
    </location>
</feature>
<feature type="domain" description="U-box">
    <location>
        <begin position="2"/>
        <end position="73"/>
    </location>
</feature>
<feature type="repeat" description="WD 1">
    <location>
        <begin position="219"/>
        <end position="259"/>
    </location>
</feature>
<feature type="repeat" description="WD 2">
    <location>
        <begin position="262"/>
        <end position="301"/>
    </location>
</feature>
<feature type="repeat" description="WD 3">
    <location>
        <begin position="304"/>
        <end position="345"/>
    </location>
</feature>
<feature type="repeat" description="WD 4">
    <location>
        <begin position="348"/>
        <end position="387"/>
    </location>
</feature>
<feature type="repeat" description="WD 5">
    <location>
        <begin position="390"/>
        <end position="429"/>
    </location>
</feature>
<feature type="repeat" description="WD 6">
    <location>
        <begin position="433"/>
        <end position="472"/>
    </location>
</feature>
<feature type="repeat" description="WD 7">
    <location>
        <begin position="473"/>
        <end position="503"/>
    </location>
</feature>
<feature type="region of interest" description="May mediate interaction with PSMC5" evidence="5">
    <location>
        <begin position="68"/>
        <end position="223"/>
    </location>
</feature>
<feature type="modified residue" description="N-acetylserine" evidence="2">
    <location>
        <position position="2"/>
    </location>
</feature>
<feature type="modified residue" description="N6-acetyllysine" evidence="2">
    <location>
        <position position="122"/>
    </location>
</feature>
<feature type="modified residue" description="N6-acetyllysine" evidence="11">
    <location>
        <position position="179"/>
    </location>
</feature>
<feature type="modified residue" description="N6-acetyllysine" evidence="11">
    <location>
        <position position="244"/>
    </location>
</feature>
<feature type="modified residue" description="N6-acetyllysine" evidence="2">
    <location>
        <position position="261"/>
    </location>
</feature>
<feature type="splice variant" id="VSP_012192" description="In isoform 3." evidence="6">
    <location>
        <begin position="1"/>
        <end position="85"/>
    </location>
</feature>
<feature type="splice variant" id="VSP_011945" description="In isoform 2." evidence="3 6">
    <original>W</original>
    <variation>WGWPNSPALPQSSQWPTLSQ</variation>
    <location>
        <position position="82"/>
    </location>
</feature>
<proteinExistence type="evidence at protein level"/>